<protein>
    <recommendedName>
        <fullName evidence="1">S-adenosylmethionine:tRNA ribosyltransferase-isomerase</fullName>
        <ecNumber evidence="1">2.4.99.17</ecNumber>
    </recommendedName>
    <alternativeName>
        <fullName evidence="1">Queuosine biosynthesis protein QueA</fullName>
    </alternativeName>
</protein>
<name>QUEA_RICB8</name>
<gene>
    <name evidence="1" type="primary">queA</name>
    <name type="ordered locus">A1I_02360</name>
</gene>
<proteinExistence type="inferred from homology"/>
<accession>A8GVG9</accession>
<reference key="1">
    <citation type="submission" date="2007-09" db="EMBL/GenBank/DDBJ databases">
        <title>Complete genome sequencing of Rickettsia bellii.</title>
        <authorList>
            <person name="Madan A."/>
            <person name="Lee H."/>
            <person name="Madan A."/>
            <person name="Yoon J.-G."/>
            <person name="Ryu G.-Y."/>
            <person name="Dasch G."/>
            <person name="Ereemeva M."/>
        </authorList>
    </citation>
    <scope>NUCLEOTIDE SEQUENCE [LARGE SCALE GENOMIC DNA]</scope>
    <source>
        <strain>OSU 85-389</strain>
    </source>
</reference>
<keyword id="KW-0963">Cytoplasm</keyword>
<keyword id="KW-0671">Queuosine biosynthesis</keyword>
<keyword id="KW-0949">S-adenosyl-L-methionine</keyword>
<keyword id="KW-0808">Transferase</keyword>
<comment type="function">
    <text evidence="1">Transfers and isomerizes the ribose moiety from AdoMet to the 7-aminomethyl group of 7-deazaguanine (preQ1-tRNA) to give epoxyqueuosine (oQ-tRNA).</text>
</comment>
<comment type="catalytic activity">
    <reaction evidence="1">
        <text>7-aminomethyl-7-carbaguanosine(34) in tRNA + S-adenosyl-L-methionine = epoxyqueuosine(34) in tRNA + adenine + L-methionine + 2 H(+)</text>
        <dbReference type="Rhea" id="RHEA:32155"/>
        <dbReference type="Rhea" id="RHEA-COMP:10342"/>
        <dbReference type="Rhea" id="RHEA-COMP:18582"/>
        <dbReference type="ChEBI" id="CHEBI:15378"/>
        <dbReference type="ChEBI" id="CHEBI:16708"/>
        <dbReference type="ChEBI" id="CHEBI:57844"/>
        <dbReference type="ChEBI" id="CHEBI:59789"/>
        <dbReference type="ChEBI" id="CHEBI:82833"/>
        <dbReference type="ChEBI" id="CHEBI:194443"/>
        <dbReference type="EC" id="2.4.99.17"/>
    </reaction>
</comment>
<comment type="pathway">
    <text evidence="1">tRNA modification; tRNA-queuosine biosynthesis.</text>
</comment>
<comment type="subunit">
    <text evidence="1">Monomer.</text>
</comment>
<comment type="subcellular location">
    <subcellularLocation>
        <location evidence="1">Cytoplasm</location>
    </subcellularLocation>
</comment>
<comment type="similarity">
    <text evidence="1">Belongs to the QueA family.</text>
</comment>
<feature type="chain" id="PRO_1000015261" description="S-adenosylmethionine:tRNA ribosyltransferase-isomerase">
    <location>
        <begin position="1"/>
        <end position="353"/>
    </location>
</feature>
<dbReference type="EC" id="2.4.99.17" evidence="1"/>
<dbReference type="EMBL" id="CP000849">
    <property type="protein sequence ID" value="ABV78846.1"/>
    <property type="molecule type" value="Genomic_DNA"/>
</dbReference>
<dbReference type="RefSeq" id="WP_012151694.1">
    <property type="nucleotide sequence ID" value="NC_009883.1"/>
</dbReference>
<dbReference type="SMR" id="A8GVG9"/>
<dbReference type="KEGG" id="rbo:A1I_02360"/>
<dbReference type="HOGENOM" id="CLU_039110_1_0_5"/>
<dbReference type="UniPathway" id="UPA00392"/>
<dbReference type="GO" id="GO:0005737">
    <property type="term" value="C:cytoplasm"/>
    <property type="evidence" value="ECO:0007669"/>
    <property type="project" value="UniProtKB-SubCell"/>
</dbReference>
<dbReference type="GO" id="GO:0051075">
    <property type="term" value="F:S-adenosylmethionine:tRNA ribosyltransferase-isomerase activity"/>
    <property type="evidence" value="ECO:0007669"/>
    <property type="project" value="UniProtKB-EC"/>
</dbReference>
<dbReference type="GO" id="GO:0008616">
    <property type="term" value="P:queuosine biosynthetic process"/>
    <property type="evidence" value="ECO:0007669"/>
    <property type="project" value="UniProtKB-UniRule"/>
</dbReference>
<dbReference type="GO" id="GO:0002099">
    <property type="term" value="P:tRNA wobble guanine modification"/>
    <property type="evidence" value="ECO:0007669"/>
    <property type="project" value="TreeGrafter"/>
</dbReference>
<dbReference type="FunFam" id="3.40.1780.10:FF:000001">
    <property type="entry name" value="S-adenosylmethionine:tRNA ribosyltransferase-isomerase"/>
    <property type="match status" value="1"/>
</dbReference>
<dbReference type="Gene3D" id="2.40.10.240">
    <property type="entry name" value="QueA-like"/>
    <property type="match status" value="1"/>
</dbReference>
<dbReference type="Gene3D" id="3.40.1780.10">
    <property type="entry name" value="QueA-like"/>
    <property type="match status" value="1"/>
</dbReference>
<dbReference type="HAMAP" id="MF_00113">
    <property type="entry name" value="QueA"/>
    <property type="match status" value="1"/>
</dbReference>
<dbReference type="InterPro" id="IPR003699">
    <property type="entry name" value="QueA"/>
</dbReference>
<dbReference type="InterPro" id="IPR042118">
    <property type="entry name" value="QueA_dom1"/>
</dbReference>
<dbReference type="InterPro" id="IPR042119">
    <property type="entry name" value="QueA_dom2"/>
</dbReference>
<dbReference type="InterPro" id="IPR036100">
    <property type="entry name" value="QueA_sf"/>
</dbReference>
<dbReference type="NCBIfam" id="NF001140">
    <property type="entry name" value="PRK00147.1"/>
    <property type="match status" value="1"/>
</dbReference>
<dbReference type="NCBIfam" id="TIGR00113">
    <property type="entry name" value="queA"/>
    <property type="match status" value="1"/>
</dbReference>
<dbReference type="PANTHER" id="PTHR30307">
    <property type="entry name" value="S-ADENOSYLMETHIONINE:TRNA RIBOSYLTRANSFERASE-ISOMERASE"/>
    <property type="match status" value="1"/>
</dbReference>
<dbReference type="PANTHER" id="PTHR30307:SF0">
    <property type="entry name" value="S-ADENOSYLMETHIONINE:TRNA RIBOSYLTRANSFERASE-ISOMERASE"/>
    <property type="match status" value="1"/>
</dbReference>
<dbReference type="Pfam" id="PF02547">
    <property type="entry name" value="Queuosine_synth"/>
    <property type="match status" value="1"/>
</dbReference>
<dbReference type="SUPFAM" id="SSF111337">
    <property type="entry name" value="QueA-like"/>
    <property type="match status" value="1"/>
</dbReference>
<evidence type="ECO:0000255" key="1">
    <source>
        <dbReference type="HAMAP-Rule" id="MF_00113"/>
    </source>
</evidence>
<organism>
    <name type="scientific">Rickettsia bellii (strain OSU 85-389)</name>
    <dbReference type="NCBI Taxonomy" id="391896"/>
    <lineage>
        <taxon>Bacteria</taxon>
        <taxon>Pseudomonadati</taxon>
        <taxon>Pseudomonadota</taxon>
        <taxon>Alphaproteobacteria</taxon>
        <taxon>Rickettsiales</taxon>
        <taxon>Rickettsiaceae</taxon>
        <taxon>Rickettsieae</taxon>
        <taxon>Rickettsia</taxon>
        <taxon>belli group</taxon>
    </lineage>
</organism>
<sequence>MKLSDFDFDLPLELIAQNPISKRDESNLLIASTQQYVKTKFYNIIDYLKEGDLLVFNNSKVIKAKLSLDKNITINLNQRLKDNRRATNDDAGRLKSIDYWSAFAKPARKLKVGDEFYFDNHKIIITEKLEMGEIKIKFELANISVFEFLDKYGEMPLPLYIKRPERQKSDDERYQTVYSNIQGSVAAPTAGLHFTNDIINKLKAKGVQVAFVTLHVGAGTFMPVKTENINEHKMHTEYCSITPETAAIINKAKKEKRRIIAVGTTSLRTLESSGINGNVNSGDFETDIFITPGFKFQIVDMLLTNFHFPKSTLFMLVCAFAGFKEMHELYKYAIEEQMRFFSYGDATLLYKKV</sequence>